<dbReference type="EC" id="2.1.2.3" evidence="1"/>
<dbReference type="EC" id="3.5.4.10" evidence="1"/>
<dbReference type="EMBL" id="CP000524">
    <property type="protein sequence ID" value="ABM45521.1"/>
    <property type="molecule type" value="Genomic_DNA"/>
</dbReference>
<dbReference type="RefSeq" id="WP_005765810.1">
    <property type="nucleotide sequence ID" value="NC_008783.1"/>
</dbReference>
<dbReference type="SMR" id="A1UR09"/>
<dbReference type="STRING" id="360095.BARBAKC583_0074"/>
<dbReference type="GeneID" id="4684296"/>
<dbReference type="KEGG" id="bbk:BARBAKC583_0074"/>
<dbReference type="PATRIC" id="fig|360095.6.peg.74"/>
<dbReference type="eggNOG" id="COG0138">
    <property type="taxonomic scope" value="Bacteria"/>
</dbReference>
<dbReference type="HOGENOM" id="CLU_016316_5_2_5"/>
<dbReference type="OrthoDB" id="9802065at2"/>
<dbReference type="UniPathway" id="UPA00074">
    <property type="reaction ID" value="UER00133"/>
</dbReference>
<dbReference type="UniPathway" id="UPA00074">
    <property type="reaction ID" value="UER00135"/>
</dbReference>
<dbReference type="Proteomes" id="UP000000643">
    <property type="component" value="Chromosome"/>
</dbReference>
<dbReference type="GO" id="GO:0005829">
    <property type="term" value="C:cytosol"/>
    <property type="evidence" value="ECO:0007669"/>
    <property type="project" value="TreeGrafter"/>
</dbReference>
<dbReference type="GO" id="GO:0003937">
    <property type="term" value="F:IMP cyclohydrolase activity"/>
    <property type="evidence" value="ECO:0007669"/>
    <property type="project" value="UniProtKB-UniRule"/>
</dbReference>
<dbReference type="GO" id="GO:0004643">
    <property type="term" value="F:phosphoribosylaminoimidazolecarboxamide formyltransferase activity"/>
    <property type="evidence" value="ECO:0007669"/>
    <property type="project" value="UniProtKB-UniRule"/>
</dbReference>
<dbReference type="GO" id="GO:0006189">
    <property type="term" value="P:'de novo' IMP biosynthetic process"/>
    <property type="evidence" value="ECO:0007669"/>
    <property type="project" value="UniProtKB-UniRule"/>
</dbReference>
<dbReference type="CDD" id="cd01421">
    <property type="entry name" value="IMPCH"/>
    <property type="match status" value="1"/>
</dbReference>
<dbReference type="FunFam" id="3.40.140.20:FF:000001">
    <property type="entry name" value="Bifunctional purine biosynthesis protein PurH"/>
    <property type="match status" value="1"/>
</dbReference>
<dbReference type="FunFam" id="3.40.50.1380:FF:000001">
    <property type="entry name" value="Bifunctional purine biosynthesis protein PurH"/>
    <property type="match status" value="1"/>
</dbReference>
<dbReference type="Gene3D" id="3.40.140.20">
    <property type="match status" value="2"/>
</dbReference>
<dbReference type="Gene3D" id="3.40.50.1380">
    <property type="entry name" value="Methylglyoxal synthase-like domain"/>
    <property type="match status" value="1"/>
</dbReference>
<dbReference type="HAMAP" id="MF_00139">
    <property type="entry name" value="PurH"/>
    <property type="match status" value="1"/>
</dbReference>
<dbReference type="InterPro" id="IPR024051">
    <property type="entry name" value="AICAR_Tfase_dup_dom_sf"/>
</dbReference>
<dbReference type="InterPro" id="IPR016193">
    <property type="entry name" value="Cytidine_deaminase-like"/>
</dbReference>
<dbReference type="InterPro" id="IPR011607">
    <property type="entry name" value="MGS-like_dom"/>
</dbReference>
<dbReference type="InterPro" id="IPR036914">
    <property type="entry name" value="MGS-like_dom_sf"/>
</dbReference>
<dbReference type="InterPro" id="IPR002695">
    <property type="entry name" value="PurH-like"/>
</dbReference>
<dbReference type="NCBIfam" id="NF002049">
    <property type="entry name" value="PRK00881.1"/>
    <property type="match status" value="1"/>
</dbReference>
<dbReference type="NCBIfam" id="TIGR00355">
    <property type="entry name" value="purH"/>
    <property type="match status" value="1"/>
</dbReference>
<dbReference type="PANTHER" id="PTHR11692:SF0">
    <property type="entry name" value="BIFUNCTIONAL PURINE BIOSYNTHESIS PROTEIN ATIC"/>
    <property type="match status" value="1"/>
</dbReference>
<dbReference type="PANTHER" id="PTHR11692">
    <property type="entry name" value="BIFUNCTIONAL PURINE BIOSYNTHESIS PROTEIN PURH"/>
    <property type="match status" value="1"/>
</dbReference>
<dbReference type="Pfam" id="PF01808">
    <property type="entry name" value="AICARFT_IMPCHas"/>
    <property type="match status" value="1"/>
</dbReference>
<dbReference type="Pfam" id="PF02142">
    <property type="entry name" value="MGS"/>
    <property type="match status" value="1"/>
</dbReference>
<dbReference type="PIRSF" id="PIRSF000414">
    <property type="entry name" value="AICARFT_IMPCHas"/>
    <property type="match status" value="1"/>
</dbReference>
<dbReference type="SMART" id="SM00798">
    <property type="entry name" value="AICARFT_IMPCHas"/>
    <property type="match status" value="1"/>
</dbReference>
<dbReference type="SMART" id="SM00851">
    <property type="entry name" value="MGS"/>
    <property type="match status" value="1"/>
</dbReference>
<dbReference type="SUPFAM" id="SSF53927">
    <property type="entry name" value="Cytidine deaminase-like"/>
    <property type="match status" value="1"/>
</dbReference>
<dbReference type="SUPFAM" id="SSF52335">
    <property type="entry name" value="Methylglyoxal synthase-like"/>
    <property type="match status" value="1"/>
</dbReference>
<dbReference type="PROSITE" id="PS51855">
    <property type="entry name" value="MGS"/>
    <property type="match status" value="1"/>
</dbReference>
<keyword id="KW-0378">Hydrolase</keyword>
<keyword id="KW-0511">Multifunctional enzyme</keyword>
<keyword id="KW-0658">Purine biosynthesis</keyword>
<keyword id="KW-0808">Transferase</keyword>
<accession>A1UR09</accession>
<reference key="1">
    <citation type="submission" date="2006-12" db="EMBL/GenBank/DDBJ databases">
        <authorList>
            <person name="Hendrix L."/>
            <person name="Mohamoud Y."/>
            <person name="Radune D."/>
            <person name="Shvartsbeyn A."/>
            <person name="Daugherty S."/>
            <person name="Dodson R."/>
            <person name="Durkin A.S."/>
            <person name="Harkins D."/>
            <person name="Huot H."/>
            <person name="Kothari S.P."/>
            <person name="Madupu R."/>
            <person name="Li J."/>
            <person name="Nelson W.C."/>
            <person name="Shrivastava S."/>
            <person name="Giglio M.G."/>
            <person name="Haft D."/>
            <person name="Selengut J."/>
            <person name="Fraser-Ligget C."/>
            <person name="Seshadri R."/>
        </authorList>
    </citation>
    <scope>NUCLEOTIDE SEQUENCE [LARGE SCALE GENOMIC DNA]</scope>
    <source>
        <strain>ATCC 35685 / KC583 / Herrer 020/F12,63</strain>
    </source>
</reference>
<name>PUR9_BARBK</name>
<proteinExistence type="inferred from homology"/>
<feature type="chain" id="PRO_1000018844" description="Bifunctional purine biosynthesis protein PurH">
    <location>
        <begin position="1"/>
        <end position="538"/>
    </location>
</feature>
<feature type="domain" description="MGS-like" evidence="2">
    <location>
        <begin position="11"/>
        <end position="158"/>
    </location>
</feature>
<sequence>MVVVSQNYPTPDLHRVRRALLSVFDKTGLVEFAQELHAYGIELISTGGTSESLIAAGLPVKDVSEVTGFPQIMDGRVKTLHPLIHGGLLGVRDDPSHKAAMEKHGICGIDLVVVNLYPFEKTWQSGADSQTIIENIDIGGPAMIRAAAKNHAYTGVVTAVSDYDVVLAELKQHNGCLSFSLRRQLAARAYEHTAAYDAAIAAWFAQDLEVEMPSWQNFSGHFESMMRYGENPHQRAAFYRTRDTRFGVATAKVLQGKELSYNNMNDADAAFELVAEFDPQRTAAVALIKHANPCGVAEGQSLKEAYLKALMCDSVSAFGGIVALNQPLDEECAAEIVKLFTEVIIAPDATEAACNIIAQKKNLRLLITGGVPDPRCGGLTVKTLAGGVLVQSRDNAVVDDFDLQIVTKRAPSQDEMRDLQFAFRVVKHVKSNAIVYAKNSATVGIGAGQMSRLDSARIAVHKAEDNAKRMGLTESLTRGSVVASDAFFPFADGLISAAEAGVTAVIQPGGSIRDQEVIEAADARGLAMVFTGVRHFRH</sequence>
<comment type="catalytic activity">
    <reaction evidence="1">
        <text>(6R)-10-formyltetrahydrofolate + 5-amino-1-(5-phospho-beta-D-ribosyl)imidazole-4-carboxamide = 5-formamido-1-(5-phospho-D-ribosyl)imidazole-4-carboxamide + (6S)-5,6,7,8-tetrahydrofolate</text>
        <dbReference type="Rhea" id="RHEA:22192"/>
        <dbReference type="ChEBI" id="CHEBI:57453"/>
        <dbReference type="ChEBI" id="CHEBI:58467"/>
        <dbReference type="ChEBI" id="CHEBI:58475"/>
        <dbReference type="ChEBI" id="CHEBI:195366"/>
        <dbReference type="EC" id="2.1.2.3"/>
    </reaction>
</comment>
<comment type="catalytic activity">
    <reaction evidence="1">
        <text>IMP + H2O = 5-formamido-1-(5-phospho-D-ribosyl)imidazole-4-carboxamide</text>
        <dbReference type="Rhea" id="RHEA:18445"/>
        <dbReference type="ChEBI" id="CHEBI:15377"/>
        <dbReference type="ChEBI" id="CHEBI:58053"/>
        <dbReference type="ChEBI" id="CHEBI:58467"/>
        <dbReference type="EC" id="3.5.4.10"/>
    </reaction>
</comment>
<comment type="pathway">
    <text evidence="1">Purine metabolism; IMP biosynthesis via de novo pathway; 5-formamido-1-(5-phospho-D-ribosyl)imidazole-4-carboxamide from 5-amino-1-(5-phospho-D-ribosyl)imidazole-4-carboxamide (10-formyl THF route): step 1/1.</text>
</comment>
<comment type="pathway">
    <text evidence="1">Purine metabolism; IMP biosynthesis via de novo pathway; IMP from 5-formamido-1-(5-phospho-D-ribosyl)imidazole-4-carboxamide: step 1/1.</text>
</comment>
<comment type="domain">
    <text evidence="1">The IMP cyclohydrolase activity resides in the N-terminal region.</text>
</comment>
<comment type="similarity">
    <text evidence="1">Belongs to the PurH family.</text>
</comment>
<evidence type="ECO:0000255" key="1">
    <source>
        <dbReference type="HAMAP-Rule" id="MF_00139"/>
    </source>
</evidence>
<evidence type="ECO:0000255" key="2">
    <source>
        <dbReference type="PROSITE-ProRule" id="PRU01202"/>
    </source>
</evidence>
<protein>
    <recommendedName>
        <fullName evidence="1">Bifunctional purine biosynthesis protein PurH</fullName>
    </recommendedName>
    <domain>
        <recommendedName>
            <fullName evidence="1">Phosphoribosylaminoimidazolecarboxamide formyltransferase</fullName>
            <ecNumber evidence="1">2.1.2.3</ecNumber>
        </recommendedName>
        <alternativeName>
            <fullName evidence="1">AICAR transformylase</fullName>
        </alternativeName>
    </domain>
    <domain>
        <recommendedName>
            <fullName evidence="1">IMP cyclohydrolase</fullName>
            <ecNumber evidence="1">3.5.4.10</ecNumber>
        </recommendedName>
        <alternativeName>
            <fullName evidence="1">ATIC</fullName>
        </alternativeName>
        <alternativeName>
            <fullName evidence="1">IMP synthase</fullName>
        </alternativeName>
        <alternativeName>
            <fullName evidence="1">Inosinicase</fullName>
        </alternativeName>
    </domain>
</protein>
<organism>
    <name type="scientific">Bartonella bacilliformis (strain ATCC 35685 / KC583 / Herrer 020/F12,63)</name>
    <dbReference type="NCBI Taxonomy" id="360095"/>
    <lineage>
        <taxon>Bacteria</taxon>
        <taxon>Pseudomonadati</taxon>
        <taxon>Pseudomonadota</taxon>
        <taxon>Alphaproteobacteria</taxon>
        <taxon>Hyphomicrobiales</taxon>
        <taxon>Bartonellaceae</taxon>
        <taxon>Bartonella</taxon>
    </lineage>
</organism>
<gene>
    <name evidence="1" type="primary">purH</name>
    <name type="ordered locus">BARBAKC583_0074</name>
</gene>